<feature type="chain" id="PRO_0000078894" description="Matrix protein 2">
    <location>
        <begin position="1"/>
        <end position="97"/>
    </location>
</feature>
<feature type="topological domain" description="Virion surface" evidence="1">
    <location>
        <begin position="1"/>
        <end position="22"/>
    </location>
</feature>
<feature type="transmembrane region" description="Helical; Signal-anchor for type III membrane protein" evidence="1">
    <location>
        <begin position="23"/>
        <end position="43"/>
    </location>
</feature>
<feature type="topological domain" description="Intravirion" evidence="1">
    <location>
        <begin position="44"/>
        <end position="97"/>
    </location>
</feature>
<feature type="region of interest" description="Disordered" evidence="2">
    <location>
        <begin position="60"/>
        <end position="80"/>
    </location>
</feature>
<feature type="compositionally biased region" description="Basic and acidic residues" evidence="2">
    <location>
        <begin position="71"/>
        <end position="80"/>
    </location>
</feature>
<feature type="site" description="Essential for channel activity, possibly by being protonated during channel activation, and by forming the channel gate and the selective filter" evidence="1">
    <location>
        <position position="37"/>
    </location>
</feature>
<feature type="site" description="Seems to be involved in pH gating" evidence="1">
    <location>
        <position position="41"/>
    </location>
</feature>
<feature type="modified residue" description="Phosphoserine; by host" evidence="1">
    <location>
        <position position="64"/>
    </location>
</feature>
<feature type="lipid moiety-binding region" description="S-palmitoyl cysteine; by host" evidence="1">
    <location>
        <position position="50"/>
    </location>
</feature>
<feature type="glycosylation site" description="N-linked (GlcNAc...) asparagine; by host" evidence="1">
    <location>
        <position position="20"/>
    </location>
</feature>
<feature type="disulfide bond" description="Interchain (with C-17)" evidence="1">
    <location>
        <position position="17"/>
    </location>
</feature>
<feature type="disulfide bond" description="Interchain (with C-19)" evidence="1">
    <location>
        <position position="19"/>
    </location>
</feature>
<feature type="mutagenesis site" description="Loss of infectivity, and modification of virion morphology." evidence="4">
    <original>EEY</original>
    <variation>AAA</variation>
    <location>
        <begin position="74"/>
        <end position="76"/>
    </location>
</feature>
<feature type="mutagenesis site" description="Loss of infectivity, and modification of virion morphology." evidence="4">
    <original>RKE</original>
    <variation>AAA</variation>
    <location>
        <begin position="77"/>
        <end position="79"/>
    </location>
</feature>
<feature type="sequence conflict" description="In Ref. 3; AAA91324." ref="3">
    <original>G</original>
    <variation>E</variation>
    <location>
        <position position="34"/>
    </location>
</feature>
<feature type="sequence conflict" description="In Ref. 2; AAA43274." ref="2">
    <original>F</original>
    <variation>L</variation>
    <location>
        <position position="55"/>
    </location>
</feature>
<accession>P05780</accession>
<accession>Q67182</accession>
<sequence length="97" mass="11313">MSLLTEVETPIRNEWGCRCNDSSDPLVIAANIIGILHLILWILDRLFFKCIYRRFKYGLKRGPSTEGVPESMREEYRKEQQNAVDVDDGHFVNIELE</sequence>
<dbReference type="EMBL" id="X08088">
    <property type="protein sequence ID" value="CAA30883.1"/>
    <property type="molecule type" value="Genomic_RNA"/>
</dbReference>
<dbReference type="EMBL" id="X08089">
    <property type="protein sequence ID" value="CAA30885.1"/>
    <property type="molecule type" value="Genomic_RNA"/>
</dbReference>
<dbReference type="EMBL" id="M23922">
    <property type="protein sequence ID" value="AAA43274.1"/>
    <property type="molecule type" value="Genomic_RNA"/>
</dbReference>
<dbReference type="EMBL" id="L25814">
    <property type="protein sequence ID" value="AAA91322.1"/>
    <property type="molecule type" value="mRNA"/>
</dbReference>
<dbReference type="EMBL" id="L25818">
    <property type="protein sequence ID" value="AAA91324.1"/>
    <property type="molecule type" value="Genomic_RNA"/>
</dbReference>
<dbReference type="SMR" id="P05780"/>
<dbReference type="IntAct" id="P05780">
    <property type="interactions" value="1"/>
</dbReference>
<dbReference type="GlyCosmos" id="P05780">
    <property type="glycosylation" value="1 site, No reported glycans"/>
</dbReference>
<dbReference type="Proteomes" id="UP000000834">
    <property type="component" value="Genome"/>
</dbReference>
<dbReference type="GO" id="GO:0020002">
    <property type="term" value="C:host cell plasma membrane"/>
    <property type="evidence" value="ECO:0007669"/>
    <property type="project" value="UniProtKB-SubCell"/>
</dbReference>
<dbReference type="GO" id="GO:0016020">
    <property type="term" value="C:membrane"/>
    <property type="evidence" value="ECO:0007669"/>
    <property type="project" value="UniProtKB-UniRule"/>
</dbReference>
<dbReference type="GO" id="GO:0055036">
    <property type="term" value="C:virion membrane"/>
    <property type="evidence" value="ECO:0007669"/>
    <property type="project" value="UniProtKB-SubCell"/>
</dbReference>
<dbReference type="GO" id="GO:0005216">
    <property type="term" value="F:monoatomic ion channel activity"/>
    <property type="evidence" value="ECO:0007669"/>
    <property type="project" value="UniProtKB-UniRule"/>
</dbReference>
<dbReference type="GO" id="GO:0015078">
    <property type="term" value="F:proton transmembrane transporter activity"/>
    <property type="evidence" value="ECO:0007669"/>
    <property type="project" value="UniProtKB-UniRule"/>
</dbReference>
<dbReference type="GO" id="GO:0051259">
    <property type="term" value="P:protein complex oligomerization"/>
    <property type="evidence" value="ECO:0007669"/>
    <property type="project" value="UniProtKB-UniRule"/>
</dbReference>
<dbReference type="GO" id="GO:0044694">
    <property type="term" value="P:symbiont genome entry into host cell via pore formation in plasma membrane"/>
    <property type="evidence" value="ECO:0007669"/>
    <property type="project" value="UniProtKB-UniRule"/>
</dbReference>
<dbReference type="GO" id="GO:0140321">
    <property type="term" value="P:symbiont-mediated suppression of host autophagy"/>
    <property type="evidence" value="ECO:0007669"/>
    <property type="project" value="UniProtKB-KW"/>
</dbReference>
<dbReference type="Gene3D" id="6.10.250.1640">
    <property type="match status" value="1"/>
</dbReference>
<dbReference type="HAMAP" id="MF_04069">
    <property type="entry name" value="INFV_M2"/>
    <property type="match status" value="1"/>
</dbReference>
<dbReference type="InterPro" id="IPR002089">
    <property type="entry name" value="Flu_M2"/>
</dbReference>
<dbReference type="Pfam" id="PF00599">
    <property type="entry name" value="Flu_M2"/>
    <property type="match status" value="1"/>
</dbReference>
<organism>
    <name type="scientific">Influenza A virus (strain A/Wilson-Smith/1933 H1N1)</name>
    <name type="common">Influenza A virus (strain A/WS/1933 H1N1)</name>
    <dbReference type="NCBI Taxonomy" id="381518"/>
    <lineage>
        <taxon>Viruses</taxon>
        <taxon>Riboviria</taxon>
        <taxon>Orthornavirae</taxon>
        <taxon>Negarnaviricota</taxon>
        <taxon>Polyploviricotina</taxon>
        <taxon>Insthoviricetes</taxon>
        <taxon>Articulavirales</taxon>
        <taxon>Orthomyxoviridae</taxon>
        <taxon>Alphainfluenzavirus</taxon>
        <taxon>Alphainfluenzavirus influenzae</taxon>
        <taxon>Influenza A virus</taxon>
    </lineage>
</organism>
<protein>
    <recommendedName>
        <fullName evidence="1">Matrix protein 2</fullName>
    </recommendedName>
    <alternativeName>
        <fullName evidence="1">Proton channel protein M2</fullName>
    </alternativeName>
</protein>
<name>M2_I33A0</name>
<keyword id="KW-0025">Alternative splicing</keyword>
<keyword id="KW-1015">Disulfide bond</keyword>
<keyword id="KW-0325">Glycoprotein</keyword>
<keyword id="KW-1032">Host cell membrane</keyword>
<keyword id="KW-1043">Host membrane</keyword>
<keyword id="KW-0945">Host-virus interaction</keyword>
<keyword id="KW-0375">Hydrogen ion transport</keyword>
<keyword id="KW-1083">Inhibition of host autophagy by virus</keyword>
<keyword id="KW-0407">Ion channel</keyword>
<keyword id="KW-0406">Ion transport</keyword>
<keyword id="KW-0449">Lipoprotein</keyword>
<keyword id="KW-0472">Membrane</keyword>
<keyword id="KW-0564">Palmitate</keyword>
<keyword id="KW-0597">Phosphoprotein</keyword>
<keyword id="KW-0735">Signal-anchor</keyword>
<keyword id="KW-0812">Transmembrane</keyword>
<keyword id="KW-1133">Transmembrane helix</keyword>
<keyword id="KW-0813">Transport</keyword>
<keyword id="KW-1182">Viral ion channel</keyword>
<keyword id="KW-0946">Virion</keyword>
<evidence type="ECO:0000255" key="1">
    <source>
        <dbReference type="HAMAP-Rule" id="MF_04069"/>
    </source>
</evidence>
<evidence type="ECO:0000256" key="2">
    <source>
        <dbReference type="SAM" id="MobiDB-lite"/>
    </source>
</evidence>
<evidence type="ECO:0000269" key="3">
    <source>
    </source>
</evidence>
<evidence type="ECO:0000269" key="4">
    <source>
    </source>
</evidence>
<reference key="1">
    <citation type="journal article" date="1989" name="Nucleic Acids Res.">
        <title>Nucleotide sequences of influenza A virus RNA segment 7: a comparison of five isolates.</title>
        <authorList>
            <person name="Zebedee S.L."/>
            <person name="Lamb R.A."/>
        </authorList>
    </citation>
    <scope>NUCLEOTIDE SEQUENCE [GENOMIC RNA]</scope>
    <source>
        <strain>A/WS/33</strain>
        <strain>A/WSN/33</strain>
    </source>
</reference>
<reference key="2">
    <citation type="journal article" date="1988" name="Virus Res.">
        <title>Nucleotide sequence of RNA segment 7 and the predicted amino sequence of M1 and M2 proteins of FPV/Weybridge (H7N7) and WSN (H1N1) influenza viruses.</title>
        <authorList>
            <person name="Markushin S."/>
            <person name="Ghiasi H."/>
            <person name="Sokolov N."/>
            <person name="Shilov A."/>
            <person name="Sinitsin B."/>
            <person name="Brown D."/>
            <person name="Klimov A."/>
            <person name="Nayak D."/>
        </authorList>
    </citation>
    <scope>NUCLEOTIDE SEQUENCE [GENOMIC RNA]</scope>
    <source>
        <strain>A/WSN/33</strain>
    </source>
</reference>
<reference key="3">
    <citation type="journal article" date="1995" name="Arch. Virol.">
        <title>Specific changes in the M1 protein during adaptation of influenza virus to mouse.</title>
        <authorList>
            <person name="Ward A.C."/>
        </authorList>
    </citation>
    <scope>NUCLEOTIDE SEQUENCE [GENOMIC RNA / MRNA]</scope>
    <source>
        <strain>A/NWS/33</strain>
        <strain>A/WSN/33</strain>
    </source>
</reference>
<reference key="4">
    <citation type="journal article" date="1985" name="Cell">
        <title>Influenza virus M2 protein is an integral membrane protein expressed on the infected-cell surface.</title>
        <authorList>
            <person name="Lamb R.A."/>
            <person name="Zebedee S.L."/>
            <person name="Richardson C.D."/>
        </authorList>
    </citation>
    <scope>TOPOLOGY</scope>
</reference>
<reference key="5">
    <citation type="journal article" date="1992" name="J. Virol.">
        <title>Expression of the influenza A virus M2 protein is restricted to apical surfaces of polarized epithelial cells.</title>
        <authorList>
            <person name="Hughey P.G."/>
            <person name="Compans R.W."/>
            <person name="Zebedee S.L."/>
            <person name="Lamb R.A."/>
        </authorList>
    </citation>
    <scope>SUBCELLULAR LOCATION</scope>
    <source>
        <strain>A/WSN/33</strain>
    </source>
</reference>
<reference key="6">
    <citation type="journal article" date="2006" name="J. Virol.">
        <title>The cytoplasmic tail of the influenza A virus M2 protein plays a role in viral assembly.</title>
        <authorList>
            <person name="Iwatsuki-Horimoto K."/>
            <person name="Horimoto T."/>
            <person name="Noda T."/>
            <person name="Kiso M."/>
            <person name="Maeda J."/>
            <person name="Watanabe S."/>
            <person name="Muramoto Y."/>
            <person name="Fujii K."/>
            <person name="Kawaoka Y."/>
        </authorList>
    </citation>
    <scope>DOMAIN</scope>
    <scope>MUTAGENESIS OF 74-GLU--LYS-76 AND 77-ARG--GLU-79</scope>
</reference>
<reference key="7">
    <citation type="journal article" date="2006" name="J. Virol.">
        <title>Distinct domains of the influenza a virus M2 protein cytoplasmic tail mediate binding to the M1 protein and facilitate infectious virus production.</title>
        <authorList>
            <person name="McCown M.F."/>
            <person name="Pekosz A."/>
        </authorList>
    </citation>
    <scope>INTERACTION WITH MATRIX PROTEIN 1</scope>
</reference>
<reference key="8">
    <citation type="journal article" date="2003" name="FEBS Lett.">
        <title>Proton conduction through the M2 protein of the influenza A virus; a quantitative, mechanistic analysis of experimental data.</title>
        <authorList>
            <person name="Lear J.D."/>
        </authorList>
    </citation>
    <scope>REVIEW</scope>
</reference>
<reference key="9">
    <citation type="journal article" date="2003" name="FEBS Lett.">
        <title>Computational studies of proton transport through the M2 channel.</title>
        <authorList>
            <person name="Wu Y."/>
            <person name="Voth G.A."/>
        </authorList>
    </citation>
    <scope>REVIEW</scope>
</reference>
<reference key="10">
    <citation type="journal article" date="2004" name="Virus Res.">
        <title>Assembly and budding of influenza virus.</title>
        <authorList>
            <person name="Nayak D.P."/>
            <person name="Hui E.K."/>
            <person name="Barman S."/>
        </authorList>
    </citation>
    <scope>REVIEW</scope>
</reference>
<gene>
    <name evidence="1" type="primary">M</name>
</gene>
<organismHost>
    <name type="scientific">Aves</name>
    <dbReference type="NCBI Taxonomy" id="8782"/>
</organismHost>
<organismHost>
    <name type="scientific">Homo sapiens</name>
    <name type="common">Human</name>
    <dbReference type="NCBI Taxonomy" id="9606"/>
</organismHost>
<organismHost>
    <name type="scientific">Sus scrofa</name>
    <name type="common">Pig</name>
    <dbReference type="NCBI Taxonomy" id="9823"/>
</organismHost>
<proteinExistence type="evidence at protein level"/>
<comment type="function">
    <text evidence="1">Forms a proton-selective ion channel that is necessary for the efficient release of the viral genome during virus entry. After attaching to the cell surface, the virion enters the cell by endocytosis. Acidification of the endosome triggers M2 ion channel activity. The influx of protons into virion interior is believed to disrupt interactions between the viral ribonucleoprotein (RNP), matrix protein 1 (M1), and lipid bilayers, thereby freeing the viral genome from interaction with viral proteins and enabling RNA segments to migrate to the host cell nucleus, where influenza virus RNA transcription and replication occur. Also plays a role in viral proteins secretory pathway. Elevates the intravesicular pH of normally acidic compartments, such as trans-Golgi network, preventing newly formed hemagglutinin from premature switching to the fusion-active conformation.</text>
</comment>
<comment type="activity regulation">
    <text>The M2 protein from most influenza A strains is inhibited by amantadine and rimantadine, resulting in viral uncoating incapacity. Emergence of amantadine-resistant variants is usually rapid.</text>
</comment>
<comment type="subunit">
    <text evidence="1">Homotetramer; composed of two disulfide-linked dimers held together by non-covalent interactions. May interact with matrix protein 1.</text>
</comment>
<comment type="subcellular location">
    <subcellularLocation>
        <location evidence="1 3">Virion membrane</location>
    </subcellularLocation>
    <subcellularLocation>
        <location evidence="1 3">Host apical cell membrane</location>
        <topology evidence="1 3">Single-pass type III membrane protein</topology>
    </subcellularLocation>
    <text evidence="1">Abundantly expressed at the apical plasma membrane in infected polarized epithelial cells, in close proximity to budding and assembled virions. Minor component of virions (only 16-20 molecules/virion).</text>
</comment>
<comment type="alternative products">
    <event type="alternative splicing"/>
    <isoform>
        <id>P05780-1</id>
        <name>M2</name>
        <sequence type="displayed"/>
    </isoform>
    <isoform>
        <id>P05777-1</id>
        <name>M1</name>
        <sequence type="external"/>
    </isoform>
    <text>Only the first 9 residues are shared by the 2 isoforms.</text>
</comment>
<comment type="domain">
    <text evidence="1 4">Cytoplasmic tail plays an important role in virion assembly and morphogenesis.</text>
</comment>
<comment type="miscellaneous">
    <text evidence="1">When the channel is activated, one or more imidazole moieties of His-37 probably become bi-protonated.</text>
</comment>
<comment type="similarity">
    <text evidence="1">Belongs to the influenza viruses matrix protein M2 family.</text>
</comment>